<accession>B7GW23</accession>
<reference key="1">
    <citation type="journal article" date="2008" name="J. Bacteriol.">
        <title>Comparative genome sequence analysis of multidrug-resistant Acinetobacter baumannii.</title>
        <authorList>
            <person name="Adams M.D."/>
            <person name="Goglin K."/>
            <person name="Molyneaux N."/>
            <person name="Hujer K.M."/>
            <person name="Lavender H."/>
            <person name="Jamison J.J."/>
            <person name="MacDonald I.J."/>
            <person name="Martin K.M."/>
            <person name="Russo T."/>
            <person name="Campagnari A.A."/>
            <person name="Hujer A.M."/>
            <person name="Bonomo R.A."/>
            <person name="Gill S.R."/>
        </authorList>
    </citation>
    <scope>NUCLEOTIDE SEQUENCE [LARGE SCALE GENOMIC DNA]</scope>
    <source>
        <strain>AB307-0294</strain>
    </source>
</reference>
<gene>
    <name evidence="1" type="primary">rpmJ</name>
    <name type="ordered locus">ABBFA_000453</name>
</gene>
<organism>
    <name type="scientific">Acinetobacter baumannii (strain AB307-0294)</name>
    <dbReference type="NCBI Taxonomy" id="557600"/>
    <lineage>
        <taxon>Bacteria</taxon>
        <taxon>Pseudomonadati</taxon>
        <taxon>Pseudomonadota</taxon>
        <taxon>Gammaproteobacteria</taxon>
        <taxon>Moraxellales</taxon>
        <taxon>Moraxellaceae</taxon>
        <taxon>Acinetobacter</taxon>
        <taxon>Acinetobacter calcoaceticus/baumannii complex</taxon>
    </lineage>
</organism>
<keyword id="KW-0687">Ribonucleoprotein</keyword>
<keyword id="KW-0689">Ribosomal protein</keyword>
<protein>
    <recommendedName>
        <fullName evidence="1">Large ribosomal subunit protein bL36</fullName>
    </recommendedName>
    <alternativeName>
        <fullName evidence="2">50S ribosomal protein L36</fullName>
    </alternativeName>
</protein>
<comment type="similarity">
    <text evidence="1">Belongs to the bacterial ribosomal protein bL36 family.</text>
</comment>
<evidence type="ECO:0000255" key="1">
    <source>
        <dbReference type="HAMAP-Rule" id="MF_00251"/>
    </source>
</evidence>
<evidence type="ECO:0000305" key="2"/>
<name>RL36_ACIB3</name>
<sequence length="38" mass="4265">MKVQASVKKICGSCKVIRRNGVIRVICSAEPRHKQRQG</sequence>
<proteinExistence type="inferred from homology"/>
<dbReference type="EMBL" id="CP001172">
    <property type="protein sequence ID" value="ACJ56623.1"/>
    <property type="molecule type" value="Genomic_DNA"/>
</dbReference>
<dbReference type="RefSeq" id="WP_000867907.1">
    <property type="nucleotide sequence ID" value="NZ_CP001172.1"/>
</dbReference>
<dbReference type="SMR" id="B7GW23"/>
<dbReference type="GeneID" id="97425220"/>
<dbReference type="HOGENOM" id="CLU_135723_6_2_6"/>
<dbReference type="Proteomes" id="UP000006924">
    <property type="component" value="Chromosome"/>
</dbReference>
<dbReference type="GO" id="GO:0005737">
    <property type="term" value="C:cytoplasm"/>
    <property type="evidence" value="ECO:0007669"/>
    <property type="project" value="UniProtKB-ARBA"/>
</dbReference>
<dbReference type="GO" id="GO:1990904">
    <property type="term" value="C:ribonucleoprotein complex"/>
    <property type="evidence" value="ECO:0007669"/>
    <property type="project" value="UniProtKB-KW"/>
</dbReference>
<dbReference type="GO" id="GO:0005840">
    <property type="term" value="C:ribosome"/>
    <property type="evidence" value="ECO:0007669"/>
    <property type="project" value="UniProtKB-KW"/>
</dbReference>
<dbReference type="GO" id="GO:0003735">
    <property type="term" value="F:structural constituent of ribosome"/>
    <property type="evidence" value="ECO:0007669"/>
    <property type="project" value="InterPro"/>
</dbReference>
<dbReference type="GO" id="GO:0006412">
    <property type="term" value="P:translation"/>
    <property type="evidence" value="ECO:0007669"/>
    <property type="project" value="UniProtKB-UniRule"/>
</dbReference>
<dbReference type="HAMAP" id="MF_00251">
    <property type="entry name" value="Ribosomal_bL36"/>
    <property type="match status" value="1"/>
</dbReference>
<dbReference type="InterPro" id="IPR000473">
    <property type="entry name" value="Ribosomal_bL36"/>
</dbReference>
<dbReference type="InterPro" id="IPR035977">
    <property type="entry name" value="Ribosomal_bL36_sp"/>
</dbReference>
<dbReference type="NCBIfam" id="TIGR01022">
    <property type="entry name" value="rpmJ_bact"/>
    <property type="match status" value="1"/>
</dbReference>
<dbReference type="PANTHER" id="PTHR42888">
    <property type="entry name" value="50S RIBOSOMAL PROTEIN L36, CHLOROPLASTIC"/>
    <property type="match status" value="1"/>
</dbReference>
<dbReference type="PANTHER" id="PTHR42888:SF1">
    <property type="entry name" value="LARGE RIBOSOMAL SUBUNIT PROTEIN BL36C"/>
    <property type="match status" value="1"/>
</dbReference>
<dbReference type="Pfam" id="PF00444">
    <property type="entry name" value="Ribosomal_L36"/>
    <property type="match status" value="1"/>
</dbReference>
<dbReference type="SUPFAM" id="SSF57840">
    <property type="entry name" value="Ribosomal protein L36"/>
    <property type="match status" value="1"/>
</dbReference>
<dbReference type="PROSITE" id="PS00828">
    <property type="entry name" value="RIBOSOMAL_L36"/>
    <property type="match status" value="1"/>
</dbReference>
<feature type="chain" id="PRO_1000196154" description="Large ribosomal subunit protein bL36">
    <location>
        <begin position="1"/>
        <end position="38"/>
    </location>
</feature>